<dbReference type="EMBL" id="Z49939">
    <property type="protein sequence ID" value="CAA90204.1"/>
    <property type="molecule type" value="Genomic_DNA"/>
</dbReference>
<dbReference type="EMBL" id="AY557975">
    <property type="protein sequence ID" value="AAS56301.1"/>
    <property type="molecule type" value="Genomic_DNA"/>
</dbReference>
<dbReference type="EMBL" id="BK006946">
    <property type="protein sequence ID" value="DAA10133.1"/>
    <property type="molecule type" value="Genomic_DNA"/>
</dbReference>
<dbReference type="PIR" id="S57600">
    <property type="entry name" value="S57600"/>
</dbReference>
<dbReference type="RefSeq" id="NP_013960.1">
    <property type="nucleotide sequence ID" value="NM_001182740.1"/>
</dbReference>
<dbReference type="SMR" id="Q05024"/>
<dbReference type="BioGRID" id="35411">
    <property type="interactions" value="118"/>
</dbReference>
<dbReference type="DIP" id="DIP-1551N"/>
<dbReference type="FunCoup" id="Q05024">
    <property type="interactions" value="234"/>
</dbReference>
<dbReference type="IntAct" id="Q05024">
    <property type="interactions" value="13"/>
</dbReference>
<dbReference type="MINT" id="Q05024"/>
<dbReference type="STRING" id="4932.YMR233W"/>
<dbReference type="iPTMnet" id="Q05024"/>
<dbReference type="PaxDb" id="4932-YMR233W"/>
<dbReference type="PeptideAtlas" id="Q05024"/>
<dbReference type="EnsemblFungi" id="YMR233W_mRNA">
    <property type="protein sequence ID" value="YMR233W"/>
    <property type="gene ID" value="YMR233W"/>
</dbReference>
<dbReference type="GeneID" id="855273"/>
<dbReference type="KEGG" id="sce:YMR233W"/>
<dbReference type="AGR" id="SGD:S000004846"/>
<dbReference type="SGD" id="S000004846">
    <property type="gene designation" value="TRI1"/>
</dbReference>
<dbReference type="VEuPathDB" id="FungiDB:YMR233W"/>
<dbReference type="eggNOG" id="KOG1946">
    <property type="taxonomic scope" value="Eukaryota"/>
</dbReference>
<dbReference type="GeneTree" id="ENSGT00940000176588"/>
<dbReference type="HOGENOM" id="CLU_046065_1_0_1"/>
<dbReference type="InParanoid" id="Q05024"/>
<dbReference type="OMA" id="KVWQYIR"/>
<dbReference type="OrthoDB" id="10251073at2759"/>
<dbReference type="BioCyc" id="YEAST:G3O-32914-MONOMER"/>
<dbReference type="BioGRID-ORCS" id="855273">
    <property type="hits" value="0 hits in 10 CRISPR screens"/>
</dbReference>
<dbReference type="PRO" id="PR:Q05024"/>
<dbReference type="Proteomes" id="UP000002311">
    <property type="component" value="Chromosome XIII"/>
</dbReference>
<dbReference type="RNAct" id="Q05024">
    <property type="molecule type" value="protein"/>
</dbReference>
<dbReference type="GO" id="GO:0005737">
    <property type="term" value="C:cytoplasm"/>
    <property type="evidence" value="ECO:0007005"/>
    <property type="project" value="SGD"/>
</dbReference>
<dbReference type="GO" id="GO:0005730">
    <property type="term" value="C:nucleolus"/>
    <property type="evidence" value="ECO:0007005"/>
    <property type="project" value="SGD"/>
</dbReference>
<dbReference type="GO" id="GO:0005634">
    <property type="term" value="C:nucleus"/>
    <property type="evidence" value="ECO:0007005"/>
    <property type="project" value="SGD"/>
</dbReference>
<dbReference type="GO" id="GO:0000500">
    <property type="term" value="C:RNA polymerase I upstream activating factor complex"/>
    <property type="evidence" value="ECO:0000318"/>
    <property type="project" value="GO_Central"/>
</dbReference>
<dbReference type="GO" id="GO:0001165">
    <property type="term" value="F:RNA polymerase I cis-regulatory region sequence-specific DNA binding"/>
    <property type="evidence" value="ECO:0000318"/>
    <property type="project" value="GO_Central"/>
</dbReference>
<dbReference type="GO" id="GO:0042790">
    <property type="term" value="P:nucleolar large rRNA transcription by RNA polymerase I"/>
    <property type="evidence" value="ECO:0000318"/>
    <property type="project" value="GO_Central"/>
</dbReference>
<dbReference type="GO" id="GO:0006361">
    <property type="term" value="P:transcription initiation at RNA polymerase I promoter"/>
    <property type="evidence" value="ECO:0000318"/>
    <property type="project" value="GO_Central"/>
</dbReference>
<dbReference type="CDD" id="cd10567">
    <property type="entry name" value="SWIB-MDM2_like"/>
    <property type="match status" value="1"/>
</dbReference>
<dbReference type="FunFam" id="1.10.245.10:FF:000004">
    <property type="entry name" value="Upstream activation factor subunit"/>
    <property type="match status" value="1"/>
</dbReference>
<dbReference type="Gene3D" id="1.10.245.10">
    <property type="entry name" value="SWIB/MDM2 domain"/>
    <property type="match status" value="1"/>
</dbReference>
<dbReference type="InterPro" id="IPR014876">
    <property type="entry name" value="DEK_C"/>
</dbReference>
<dbReference type="InterPro" id="IPR019835">
    <property type="entry name" value="SWIB_domain"/>
</dbReference>
<dbReference type="InterPro" id="IPR036885">
    <property type="entry name" value="SWIB_MDM2_dom_sf"/>
</dbReference>
<dbReference type="InterPro" id="IPR003121">
    <property type="entry name" value="SWIB_MDM2_domain"/>
</dbReference>
<dbReference type="PANTHER" id="PTHR13844">
    <property type="entry name" value="SWI/SNF-RELATED MATRIX-ASSOCIATED ACTIN-DEPENDENT REGULATOR OF CHROMATIN SUBFAMILY D"/>
    <property type="match status" value="1"/>
</dbReference>
<dbReference type="Pfam" id="PF08766">
    <property type="entry name" value="DEK_C"/>
    <property type="match status" value="1"/>
</dbReference>
<dbReference type="Pfam" id="PF02201">
    <property type="entry name" value="SWIB"/>
    <property type="match status" value="1"/>
</dbReference>
<dbReference type="SMART" id="SM00151">
    <property type="entry name" value="SWIB"/>
    <property type="match status" value="1"/>
</dbReference>
<dbReference type="SUPFAM" id="SSF47592">
    <property type="entry name" value="SWIB/MDM2 domain"/>
    <property type="match status" value="1"/>
</dbReference>
<dbReference type="PROSITE" id="PS51998">
    <property type="entry name" value="DEK_C"/>
    <property type="match status" value="1"/>
</dbReference>
<dbReference type="PROSITE" id="PS51925">
    <property type="entry name" value="SWIB_MDM2"/>
    <property type="match status" value="1"/>
</dbReference>
<name>TRI1_YEAST</name>
<reference key="1">
    <citation type="journal article" date="1997" name="Nature">
        <title>The nucleotide sequence of Saccharomyces cerevisiae chromosome XIII.</title>
        <authorList>
            <person name="Bowman S."/>
            <person name="Churcher C.M."/>
            <person name="Badcock K."/>
            <person name="Brown D."/>
            <person name="Chillingworth T."/>
            <person name="Connor R."/>
            <person name="Dedman K."/>
            <person name="Devlin K."/>
            <person name="Gentles S."/>
            <person name="Hamlin N."/>
            <person name="Hunt S."/>
            <person name="Jagels K."/>
            <person name="Lye G."/>
            <person name="Moule S."/>
            <person name="Odell C."/>
            <person name="Pearson D."/>
            <person name="Rajandream M.A."/>
            <person name="Rice P."/>
            <person name="Skelton J."/>
            <person name="Walsh S.V."/>
            <person name="Whitehead S."/>
            <person name="Barrell B.G."/>
        </authorList>
    </citation>
    <scope>NUCLEOTIDE SEQUENCE [LARGE SCALE GENOMIC DNA]</scope>
    <source>
        <strain>ATCC 204508 / S288c</strain>
    </source>
</reference>
<reference key="2">
    <citation type="journal article" date="2014" name="G3 (Bethesda)">
        <title>The reference genome sequence of Saccharomyces cerevisiae: Then and now.</title>
        <authorList>
            <person name="Engel S.R."/>
            <person name="Dietrich F.S."/>
            <person name="Fisk D.G."/>
            <person name="Binkley G."/>
            <person name="Balakrishnan R."/>
            <person name="Costanzo M.C."/>
            <person name="Dwight S.S."/>
            <person name="Hitz B.C."/>
            <person name="Karra K."/>
            <person name="Nash R.S."/>
            <person name="Weng S."/>
            <person name="Wong E.D."/>
            <person name="Lloyd P."/>
            <person name="Skrzypek M.S."/>
            <person name="Miyasato S.R."/>
            <person name="Simison M."/>
            <person name="Cherry J.M."/>
        </authorList>
    </citation>
    <scope>GENOME REANNOTATION</scope>
    <source>
        <strain>ATCC 204508 / S288c</strain>
    </source>
</reference>
<reference key="3">
    <citation type="journal article" date="2007" name="Genome Res.">
        <title>Approaching a complete repository of sequence-verified protein-encoding clones for Saccharomyces cerevisiae.</title>
        <authorList>
            <person name="Hu Y."/>
            <person name="Rolfs A."/>
            <person name="Bhullar B."/>
            <person name="Murthy T.V.S."/>
            <person name="Zhu C."/>
            <person name="Berger M.F."/>
            <person name="Camargo A.A."/>
            <person name="Kelley F."/>
            <person name="McCarron S."/>
            <person name="Jepson D."/>
            <person name="Richardson A."/>
            <person name="Raphael J."/>
            <person name="Moreira D."/>
            <person name="Taycher E."/>
            <person name="Zuo D."/>
            <person name="Mohr S."/>
            <person name="Kane M.F."/>
            <person name="Williamson J."/>
            <person name="Simpson A.J.G."/>
            <person name="Bulyk M.L."/>
            <person name="Harlow E."/>
            <person name="Marsischky G."/>
            <person name="Kolodner R.D."/>
            <person name="LaBaer J."/>
        </authorList>
    </citation>
    <scope>NUCLEOTIDE SEQUENCE [GENOMIC DNA]</scope>
    <source>
        <strain>ATCC 204508 / S288c</strain>
    </source>
</reference>
<reference key="4">
    <citation type="journal article" date="2003" name="Nature">
        <title>Global analysis of protein localization in budding yeast.</title>
        <authorList>
            <person name="Huh W.-K."/>
            <person name="Falvo J.V."/>
            <person name="Gerke L.C."/>
            <person name="Carroll A.S."/>
            <person name="Howson R.W."/>
            <person name="Weissman J.S."/>
            <person name="O'Shea E.K."/>
        </authorList>
    </citation>
    <scope>SUBCELLULAR LOCATION [LARGE SCALE ANALYSIS]</scope>
</reference>
<reference key="5">
    <citation type="journal article" date="2003" name="Nature">
        <title>Global analysis of protein expression in yeast.</title>
        <authorList>
            <person name="Ghaemmaghami S."/>
            <person name="Huh W.-K."/>
            <person name="Bower K."/>
            <person name="Howson R.W."/>
            <person name="Belle A."/>
            <person name="Dephoure N."/>
            <person name="O'Shea E.K."/>
            <person name="Weissman J.S."/>
        </authorList>
    </citation>
    <scope>LEVEL OF PROTEIN EXPRESSION [LARGE SCALE ANALYSIS]</scope>
</reference>
<reference key="6">
    <citation type="journal article" date="2007" name="Genetics">
        <title>Topoisomerase I-dependent viability loss in saccharomyces cerevisiae mutants defective in both SUMO conjugation and DNA repair.</title>
        <authorList>
            <person name="Chen X.L."/>
            <person name="Silver H.R."/>
            <person name="Xiong L."/>
            <person name="Belichenko I."/>
            <person name="Adegite C."/>
            <person name="Johnson E.S."/>
        </authorList>
    </citation>
    <scope>SUMOYLATION AT LYS-201 AND LYS-215</scope>
    <scope>MUTAGENESIS OF LYS-201 AND LYS-215</scope>
</reference>
<reference key="7">
    <citation type="journal article" date="2008" name="Mol. Cell. Proteomics">
        <title>A multidimensional chromatography technology for in-depth phosphoproteome analysis.</title>
        <authorList>
            <person name="Albuquerque C.P."/>
            <person name="Smolka M.B."/>
            <person name="Payne S.H."/>
            <person name="Bafna V."/>
            <person name="Eng J."/>
            <person name="Zhou H."/>
        </authorList>
    </citation>
    <scope>PHOSPHORYLATION [LARGE SCALE ANALYSIS] AT SER-225</scope>
    <scope>IDENTIFICATION BY MASS SPECTROMETRY [LARGE SCALE ANALYSIS]</scope>
</reference>
<reference key="8">
    <citation type="journal article" date="2009" name="Science">
        <title>Global analysis of Cdk1 substrate phosphorylation sites provides insights into evolution.</title>
        <authorList>
            <person name="Holt L.J."/>
            <person name="Tuch B.B."/>
            <person name="Villen J."/>
            <person name="Johnson A.D."/>
            <person name="Gygi S.P."/>
            <person name="Morgan D.O."/>
        </authorList>
    </citation>
    <scope>PHOSPHORYLATION [LARGE SCALE ANALYSIS] AT SER-113</scope>
    <scope>IDENTIFICATION BY MASS SPECTROMETRY [LARGE SCALE ANALYSIS]</scope>
</reference>
<evidence type="ECO:0000250" key="1"/>
<evidence type="ECO:0000255" key="2">
    <source>
        <dbReference type="PROSITE-ProRule" id="PRU01273"/>
    </source>
</evidence>
<evidence type="ECO:0000255" key="3">
    <source>
        <dbReference type="PROSITE-ProRule" id="PRU01342"/>
    </source>
</evidence>
<evidence type="ECO:0000256" key="4">
    <source>
        <dbReference type="SAM" id="MobiDB-lite"/>
    </source>
</evidence>
<evidence type="ECO:0000269" key="5">
    <source>
    </source>
</evidence>
<evidence type="ECO:0000269" key="6">
    <source>
    </source>
</evidence>
<evidence type="ECO:0000269" key="7">
    <source>
    </source>
</evidence>
<evidence type="ECO:0007744" key="8">
    <source>
    </source>
</evidence>
<evidence type="ECO:0007744" key="9">
    <source>
    </source>
</evidence>
<sequence>MADINKYIPMVDAILSVSNPDEISPKRVRKALQILYSVNLDSQRKLINELILERFGDIQENPRVLIPKNDLISRDQELSLRLQKEEERPLRSTRKRKGKSESKSKRKKKKNDSPDSNSISVRKVLLSAPLQKFLGSEELPRTQVVKMIWQYIKEHDLQNPKDRREILCDEKMEPIFGKKMTMFSMNKLLTKHLFNPDEIVKHEEEQKQTPEKEIKLENESLPNLSG</sequence>
<gene>
    <name type="primary">TRI1</name>
    <name type="ordered locus">YMR233W</name>
    <name type="ORF">YM9959.15</name>
</gene>
<comment type="function">
    <text evidence="1">May be involved in transcription regulation.</text>
</comment>
<comment type="subcellular location">
    <subcellularLocation>
        <location evidence="5">Cytoplasm</location>
    </subcellularLocation>
    <subcellularLocation>
        <location evidence="5">Nucleus</location>
    </subcellularLocation>
    <subcellularLocation>
        <location evidence="5">Nucleus</location>
        <location evidence="5">Nucleolus</location>
    </subcellularLocation>
</comment>
<comment type="miscellaneous">
    <text evidence="6">Present with 2360 molecules/cell in log phase SD medium.</text>
</comment>
<proteinExistence type="evidence at protein level"/>
<keyword id="KW-0963">Cytoplasm</keyword>
<keyword id="KW-1017">Isopeptide bond</keyword>
<keyword id="KW-0539">Nucleus</keyword>
<keyword id="KW-0597">Phosphoprotein</keyword>
<keyword id="KW-1185">Reference proteome</keyword>
<keyword id="KW-0804">Transcription</keyword>
<keyword id="KW-0805">Transcription regulation</keyword>
<keyword id="KW-0832">Ubl conjugation</keyword>
<protein>
    <recommendedName>
        <fullName>Protein TRI1</fullName>
    </recommendedName>
</protein>
<feature type="chain" id="PRO_0000203334" description="Protein TRI1">
    <location>
        <begin position="1"/>
        <end position="226"/>
    </location>
</feature>
<feature type="domain" description="DEK-C" evidence="3">
    <location>
        <begin position="1"/>
        <end position="56"/>
    </location>
</feature>
<feature type="domain" description="SWIB/MDM2" evidence="2">
    <location>
        <begin position="119"/>
        <end position="195"/>
    </location>
</feature>
<feature type="region of interest" description="Disordered" evidence="4">
    <location>
        <begin position="83"/>
        <end position="118"/>
    </location>
</feature>
<feature type="region of interest" description="Disordered" evidence="4">
    <location>
        <begin position="200"/>
        <end position="226"/>
    </location>
</feature>
<feature type="compositionally biased region" description="Basic residues" evidence="4">
    <location>
        <begin position="91"/>
        <end position="110"/>
    </location>
</feature>
<feature type="compositionally biased region" description="Basic and acidic residues" evidence="4">
    <location>
        <begin position="200"/>
        <end position="218"/>
    </location>
</feature>
<feature type="modified residue" description="Phosphoserine" evidence="9">
    <location>
        <position position="113"/>
    </location>
</feature>
<feature type="modified residue" description="Phosphoserine" evidence="8">
    <location>
        <position position="225"/>
    </location>
</feature>
<feature type="cross-link" description="Glycyl lysine isopeptide (Lys-Gly) (interchain with G-Cter in SUMO)">
    <location>
        <position position="201"/>
    </location>
</feature>
<feature type="cross-link" description="Glycyl lysine isopeptide (Lys-Gly) (interchain with G-Cter in SUMO)">
    <location>
        <position position="215"/>
    </location>
</feature>
<feature type="mutagenesis site" description="Impairs sumoylation; when associated with R-215." evidence="7">
    <original>K</original>
    <variation>R</variation>
    <location>
        <position position="201"/>
    </location>
</feature>
<feature type="mutagenesis site" description="Impairs sumoylation; when associated with R-201." evidence="7">
    <original>K</original>
    <variation>R</variation>
    <location>
        <position position="215"/>
    </location>
</feature>
<accession>Q05024</accession>
<accession>D6W059</accession>
<organism>
    <name type="scientific">Saccharomyces cerevisiae (strain ATCC 204508 / S288c)</name>
    <name type="common">Baker's yeast</name>
    <dbReference type="NCBI Taxonomy" id="559292"/>
    <lineage>
        <taxon>Eukaryota</taxon>
        <taxon>Fungi</taxon>
        <taxon>Dikarya</taxon>
        <taxon>Ascomycota</taxon>
        <taxon>Saccharomycotina</taxon>
        <taxon>Saccharomycetes</taxon>
        <taxon>Saccharomycetales</taxon>
        <taxon>Saccharomycetaceae</taxon>
        <taxon>Saccharomyces</taxon>
    </lineage>
</organism>